<sequence length="328" mass="38120">MNNSAFTFQTLHPDTIMDALFEHGIRVDSGLTPLNSYENRVYQFQDEDRRRFVVKFYRPERWTADQILEEHQFALQLVNDEVPVAAPVAFNGQTLLNHQGFYFAVFPSVGGRQFEADNIDQMEAVGRYLGRMHQTGRKQLFIHRPTIGLNEYLIEPRKLFEDATLIPSGLKAAFLKATDELIAAVTAHWREDFTVLRLHGDCHAGNILWRDGPMFVDLDDARNGPAVQDLWMLLNGDKAEQRMQLETIIEAYEEFSEFDTAEIGLIEPLRAMRLVYYLAWLMRRWADPAFPKNFPWLTGEDYWLRQTATFIEQAKVLQEPPLQLTPMY</sequence>
<name>SRKA_ECOL6</name>
<protein>
    <recommendedName>
        <fullName evidence="1">Stress response kinase A</fullName>
        <ecNumber evidence="1">2.7.11.1</ecNumber>
    </recommendedName>
    <alternativeName>
        <fullName evidence="1">Serine/threonine-protein kinase SrkA</fullName>
    </alternativeName>
</protein>
<organism>
    <name type="scientific">Escherichia coli O6:H1 (strain CFT073 / ATCC 700928 / UPEC)</name>
    <dbReference type="NCBI Taxonomy" id="199310"/>
    <lineage>
        <taxon>Bacteria</taxon>
        <taxon>Pseudomonadati</taxon>
        <taxon>Pseudomonadota</taxon>
        <taxon>Gammaproteobacteria</taxon>
        <taxon>Enterobacterales</taxon>
        <taxon>Enterobacteriaceae</taxon>
        <taxon>Escherichia</taxon>
    </lineage>
</organism>
<reference key="1">
    <citation type="journal article" date="2002" name="Proc. Natl. Acad. Sci. U.S.A.">
        <title>Extensive mosaic structure revealed by the complete genome sequence of uropathogenic Escherichia coli.</title>
        <authorList>
            <person name="Welch R.A."/>
            <person name="Burland V."/>
            <person name="Plunkett G. III"/>
            <person name="Redford P."/>
            <person name="Roesch P."/>
            <person name="Rasko D."/>
            <person name="Buckles E.L."/>
            <person name="Liou S.-R."/>
            <person name="Boutin A."/>
            <person name="Hackett J."/>
            <person name="Stroud D."/>
            <person name="Mayhew G.F."/>
            <person name="Rose D.J."/>
            <person name="Zhou S."/>
            <person name="Schwartz D.C."/>
            <person name="Perna N.T."/>
            <person name="Mobley H.L.T."/>
            <person name="Donnenberg M.S."/>
            <person name="Blattner F.R."/>
        </authorList>
    </citation>
    <scope>NUCLEOTIDE SEQUENCE [LARGE SCALE GENOMIC DNA]</scope>
    <source>
        <strain>CFT073 / ATCC 700928 / UPEC</strain>
    </source>
</reference>
<gene>
    <name evidence="1" type="primary">srkA</name>
    <name type="ordered locus">c4803</name>
</gene>
<evidence type="ECO:0000255" key="1">
    <source>
        <dbReference type="HAMAP-Rule" id="MF_01497"/>
    </source>
</evidence>
<dbReference type="EC" id="2.7.11.1" evidence="1"/>
<dbReference type="EMBL" id="AE014075">
    <property type="protein sequence ID" value="AAN83234.1"/>
    <property type="molecule type" value="Genomic_DNA"/>
</dbReference>
<dbReference type="RefSeq" id="WP_001065497.1">
    <property type="nucleotide sequence ID" value="NZ_CP051263.1"/>
</dbReference>
<dbReference type="RefSeq" id="WP_001065501.1">
    <property type="nucleotide sequence ID" value="NC_004431.1"/>
</dbReference>
<dbReference type="SMR" id="P0C0K4"/>
<dbReference type="STRING" id="199310.c4803"/>
<dbReference type="KEGG" id="ecc:c4803"/>
<dbReference type="eggNOG" id="COG2334">
    <property type="taxonomic scope" value="Bacteria"/>
</dbReference>
<dbReference type="HOGENOM" id="CLU_054715_0_0_6"/>
<dbReference type="BioCyc" id="ECOL199310:C4803-MONOMER"/>
<dbReference type="Proteomes" id="UP000001410">
    <property type="component" value="Chromosome"/>
</dbReference>
<dbReference type="GO" id="GO:0005737">
    <property type="term" value="C:cytoplasm"/>
    <property type="evidence" value="ECO:0007669"/>
    <property type="project" value="UniProtKB-SubCell"/>
</dbReference>
<dbReference type="GO" id="GO:0005524">
    <property type="term" value="F:ATP binding"/>
    <property type="evidence" value="ECO:0007669"/>
    <property type="project" value="UniProtKB-UniRule"/>
</dbReference>
<dbReference type="GO" id="GO:0000287">
    <property type="term" value="F:magnesium ion binding"/>
    <property type="evidence" value="ECO:0007669"/>
    <property type="project" value="UniProtKB-UniRule"/>
</dbReference>
<dbReference type="GO" id="GO:0106310">
    <property type="term" value="F:protein serine kinase activity"/>
    <property type="evidence" value="ECO:0007669"/>
    <property type="project" value="RHEA"/>
</dbReference>
<dbReference type="GO" id="GO:0004674">
    <property type="term" value="F:protein serine/threonine kinase activity"/>
    <property type="evidence" value="ECO:0007669"/>
    <property type="project" value="UniProtKB-UniRule"/>
</dbReference>
<dbReference type="Gene3D" id="1.20.1270.170">
    <property type="match status" value="1"/>
</dbReference>
<dbReference type="Gene3D" id="3.30.200.70">
    <property type="match status" value="1"/>
</dbReference>
<dbReference type="Gene3D" id="1.10.510.10">
    <property type="entry name" value="Transferase(Phosphotransferase) domain 1"/>
    <property type="match status" value="1"/>
</dbReference>
<dbReference type="HAMAP" id="MF_01497">
    <property type="entry name" value="SrkA_kinase"/>
    <property type="match status" value="1"/>
</dbReference>
<dbReference type="InterPro" id="IPR002575">
    <property type="entry name" value="Aminoglycoside_PTrfase"/>
</dbReference>
<dbReference type="InterPro" id="IPR011009">
    <property type="entry name" value="Kinase-like_dom_sf"/>
</dbReference>
<dbReference type="InterPro" id="IPR032882">
    <property type="entry name" value="SrkA/RdoA"/>
</dbReference>
<dbReference type="NCBIfam" id="NF008738">
    <property type="entry name" value="PRK11768.1"/>
    <property type="match status" value="1"/>
</dbReference>
<dbReference type="PANTHER" id="PTHR39573">
    <property type="entry name" value="STRESS RESPONSE KINASE A"/>
    <property type="match status" value="1"/>
</dbReference>
<dbReference type="PANTHER" id="PTHR39573:SF1">
    <property type="entry name" value="STRESS RESPONSE KINASE A"/>
    <property type="match status" value="1"/>
</dbReference>
<dbReference type="Pfam" id="PF01636">
    <property type="entry name" value="APH"/>
    <property type="match status" value="1"/>
</dbReference>
<dbReference type="SUPFAM" id="SSF56112">
    <property type="entry name" value="Protein kinase-like (PK-like)"/>
    <property type="match status" value="1"/>
</dbReference>
<keyword id="KW-0067">ATP-binding</keyword>
<keyword id="KW-0963">Cytoplasm</keyword>
<keyword id="KW-0418">Kinase</keyword>
<keyword id="KW-0460">Magnesium</keyword>
<keyword id="KW-0479">Metal-binding</keyword>
<keyword id="KW-0547">Nucleotide-binding</keyword>
<keyword id="KW-0597">Phosphoprotein</keyword>
<keyword id="KW-1185">Reference proteome</keyword>
<keyword id="KW-0723">Serine/threonine-protein kinase</keyword>
<keyword id="KW-0346">Stress response</keyword>
<keyword id="KW-0808">Transferase</keyword>
<feature type="chain" id="PRO_0000209576" description="Stress response kinase A">
    <location>
        <begin position="1"/>
        <end position="328"/>
    </location>
</feature>
<feature type="active site" description="Proton acceptor" evidence="1">
    <location>
        <position position="201"/>
    </location>
</feature>
<feature type="active site" evidence="1">
    <location>
        <position position="217"/>
    </location>
</feature>
<feature type="binding site" evidence="1">
    <location>
        <position position="206"/>
    </location>
    <ligand>
        <name>Mg(2+)</name>
        <dbReference type="ChEBI" id="CHEBI:18420"/>
    </ligand>
</feature>
<feature type="binding site" evidence="1">
    <location>
        <position position="217"/>
    </location>
    <ligand>
        <name>Mg(2+)</name>
        <dbReference type="ChEBI" id="CHEBI:18420"/>
    </ligand>
</feature>
<feature type="site" description="ATP" evidence="1">
    <location>
        <position position="36"/>
    </location>
</feature>
<accession>P0C0K4</accession>
<accession>P32127</accession>
<proteinExistence type="inferred from homology"/>
<comment type="function">
    <text evidence="1">A protein kinase that phosphorylates Ser and Thr residues. Probably acts to suppress the effects of stress linked to accumulation of reactive oxygen species. Probably involved in the extracytoplasmic stress response.</text>
</comment>
<comment type="catalytic activity">
    <reaction evidence="1">
        <text>L-seryl-[protein] + ATP = O-phospho-L-seryl-[protein] + ADP + H(+)</text>
        <dbReference type="Rhea" id="RHEA:17989"/>
        <dbReference type="Rhea" id="RHEA-COMP:9863"/>
        <dbReference type="Rhea" id="RHEA-COMP:11604"/>
        <dbReference type="ChEBI" id="CHEBI:15378"/>
        <dbReference type="ChEBI" id="CHEBI:29999"/>
        <dbReference type="ChEBI" id="CHEBI:30616"/>
        <dbReference type="ChEBI" id="CHEBI:83421"/>
        <dbReference type="ChEBI" id="CHEBI:456216"/>
        <dbReference type="EC" id="2.7.11.1"/>
    </reaction>
</comment>
<comment type="catalytic activity">
    <reaction evidence="1">
        <text>L-threonyl-[protein] + ATP = O-phospho-L-threonyl-[protein] + ADP + H(+)</text>
        <dbReference type="Rhea" id="RHEA:46608"/>
        <dbReference type="Rhea" id="RHEA-COMP:11060"/>
        <dbReference type="Rhea" id="RHEA-COMP:11605"/>
        <dbReference type="ChEBI" id="CHEBI:15378"/>
        <dbReference type="ChEBI" id="CHEBI:30013"/>
        <dbReference type="ChEBI" id="CHEBI:30616"/>
        <dbReference type="ChEBI" id="CHEBI:61977"/>
        <dbReference type="ChEBI" id="CHEBI:456216"/>
        <dbReference type="EC" id="2.7.11.1"/>
    </reaction>
</comment>
<comment type="cofactor">
    <cofactor evidence="1">
        <name>Mg(2+)</name>
        <dbReference type="ChEBI" id="CHEBI:18420"/>
    </cofactor>
</comment>
<comment type="subunit">
    <text evidence="1">Monomer.</text>
</comment>
<comment type="subcellular location">
    <subcellularLocation>
        <location evidence="1">Cytoplasm</location>
    </subcellularLocation>
</comment>
<comment type="similarity">
    <text evidence="1">Belongs to the SrkA/RdoA protein kinase family.</text>
</comment>